<reference key="1">
    <citation type="journal article" date="2005" name="J. Bacteriol.">
        <title>Insights into genome plasticity and pathogenicity of the plant pathogenic Bacterium Xanthomonas campestris pv. vesicatoria revealed by the complete genome sequence.</title>
        <authorList>
            <person name="Thieme F."/>
            <person name="Koebnik R."/>
            <person name="Bekel T."/>
            <person name="Berger C."/>
            <person name="Boch J."/>
            <person name="Buettner D."/>
            <person name="Caldana C."/>
            <person name="Gaigalat L."/>
            <person name="Goesmann A."/>
            <person name="Kay S."/>
            <person name="Kirchner O."/>
            <person name="Lanz C."/>
            <person name="Linke B."/>
            <person name="McHardy A.C."/>
            <person name="Meyer F."/>
            <person name="Mittenhuber G."/>
            <person name="Nies D.H."/>
            <person name="Niesbach-Kloesgen U."/>
            <person name="Patschkowski T."/>
            <person name="Rueckert C."/>
            <person name="Rupp O."/>
            <person name="Schneiker S."/>
            <person name="Schuster S.C."/>
            <person name="Vorhoelter F.J."/>
            <person name="Weber E."/>
            <person name="Puehler A."/>
            <person name="Bonas U."/>
            <person name="Bartels D."/>
            <person name="Kaiser O."/>
        </authorList>
    </citation>
    <scope>NUCLEOTIDE SEQUENCE [LARGE SCALE GENOMIC DNA]</scope>
    <source>
        <strain>85-10</strain>
    </source>
</reference>
<dbReference type="EC" id="5.4.99.25" evidence="1"/>
<dbReference type="EMBL" id="AM039952">
    <property type="protein sequence ID" value="CAJ24514.1"/>
    <property type="molecule type" value="Genomic_DNA"/>
</dbReference>
<dbReference type="RefSeq" id="WP_011347933.1">
    <property type="nucleotide sequence ID" value="NZ_CP017190.1"/>
</dbReference>
<dbReference type="SMR" id="Q3BRP7"/>
<dbReference type="STRING" id="456327.BJD11_08700"/>
<dbReference type="KEGG" id="xcv:XCV2835"/>
<dbReference type="eggNOG" id="COG0130">
    <property type="taxonomic scope" value="Bacteria"/>
</dbReference>
<dbReference type="HOGENOM" id="CLU_032087_0_3_6"/>
<dbReference type="Proteomes" id="UP000007069">
    <property type="component" value="Chromosome"/>
</dbReference>
<dbReference type="GO" id="GO:0003723">
    <property type="term" value="F:RNA binding"/>
    <property type="evidence" value="ECO:0007669"/>
    <property type="project" value="InterPro"/>
</dbReference>
<dbReference type="GO" id="GO:0160148">
    <property type="term" value="F:tRNA pseudouridine(55) synthase activity"/>
    <property type="evidence" value="ECO:0007669"/>
    <property type="project" value="UniProtKB-EC"/>
</dbReference>
<dbReference type="GO" id="GO:1990481">
    <property type="term" value="P:mRNA pseudouridine synthesis"/>
    <property type="evidence" value="ECO:0007669"/>
    <property type="project" value="TreeGrafter"/>
</dbReference>
<dbReference type="GO" id="GO:0031119">
    <property type="term" value="P:tRNA pseudouridine synthesis"/>
    <property type="evidence" value="ECO:0007669"/>
    <property type="project" value="UniProtKB-UniRule"/>
</dbReference>
<dbReference type="CDD" id="cd02573">
    <property type="entry name" value="PseudoU_synth_EcTruB"/>
    <property type="match status" value="1"/>
</dbReference>
<dbReference type="CDD" id="cd21152">
    <property type="entry name" value="PUA_TruB_bacterial"/>
    <property type="match status" value="1"/>
</dbReference>
<dbReference type="FunFam" id="3.30.2350.10:FF:000011">
    <property type="entry name" value="tRNA pseudouridine synthase B"/>
    <property type="match status" value="1"/>
</dbReference>
<dbReference type="Gene3D" id="3.30.2350.10">
    <property type="entry name" value="Pseudouridine synthase"/>
    <property type="match status" value="1"/>
</dbReference>
<dbReference type="Gene3D" id="2.30.130.10">
    <property type="entry name" value="PUA domain"/>
    <property type="match status" value="1"/>
</dbReference>
<dbReference type="HAMAP" id="MF_01080">
    <property type="entry name" value="TruB_bact"/>
    <property type="match status" value="1"/>
</dbReference>
<dbReference type="InterPro" id="IPR020103">
    <property type="entry name" value="PsdUridine_synth_cat_dom_sf"/>
</dbReference>
<dbReference type="InterPro" id="IPR002501">
    <property type="entry name" value="PsdUridine_synth_N"/>
</dbReference>
<dbReference type="InterPro" id="IPR015947">
    <property type="entry name" value="PUA-like_sf"/>
</dbReference>
<dbReference type="InterPro" id="IPR036974">
    <property type="entry name" value="PUA_sf"/>
</dbReference>
<dbReference type="InterPro" id="IPR014780">
    <property type="entry name" value="tRNA_psdUridine_synth_TruB"/>
</dbReference>
<dbReference type="InterPro" id="IPR015240">
    <property type="entry name" value="tRNA_sdUridine_synth_fam1_C"/>
</dbReference>
<dbReference type="InterPro" id="IPR032819">
    <property type="entry name" value="TruB_C"/>
</dbReference>
<dbReference type="NCBIfam" id="TIGR00431">
    <property type="entry name" value="TruB"/>
    <property type="match status" value="1"/>
</dbReference>
<dbReference type="PANTHER" id="PTHR13767:SF2">
    <property type="entry name" value="PSEUDOURIDYLATE SYNTHASE TRUB1"/>
    <property type="match status" value="1"/>
</dbReference>
<dbReference type="PANTHER" id="PTHR13767">
    <property type="entry name" value="TRNA-PSEUDOURIDINE SYNTHASE"/>
    <property type="match status" value="1"/>
</dbReference>
<dbReference type="Pfam" id="PF09157">
    <property type="entry name" value="TruB-C_2"/>
    <property type="match status" value="1"/>
</dbReference>
<dbReference type="Pfam" id="PF16198">
    <property type="entry name" value="TruB_C_2"/>
    <property type="match status" value="1"/>
</dbReference>
<dbReference type="Pfam" id="PF01509">
    <property type="entry name" value="TruB_N"/>
    <property type="match status" value="1"/>
</dbReference>
<dbReference type="SUPFAM" id="SSF55120">
    <property type="entry name" value="Pseudouridine synthase"/>
    <property type="match status" value="1"/>
</dbReference>
<dbReference type="SUPFAM" id="SSF88697">
    <property type="entry name" value="PUA domain-like"/>
    <property type="match status" value="1"/>
</dbReference>
<organism>
    <name type="scientific">Xanthomonas euvesicatoria pv. vesicatoria (strain 85-10)</name>
    <name type="common">Xanthomonas campestris pv. vesicatoria</name>
    <dbReference type="NCBI Taxonomy" id="316273"/>
    <lineage>
        <taxon>Bacteria</taxon>
        <taxon>Pseudomonadati</taxon>
        <taxon>Pseudomonadota</taxon>
        <taxon>Gammaproteobacteria</taxon>
        <taxon>Lysobacterales</taxon>
        <taxon>Lysobacteraceae</taxon>
        <taxon>Xanthomonas</taxon>
    </lineage>
</organism>
<keyword id="KW-0413">Isomerase</keyword>
<keyword id="KW-0819">tRNA processing</keyword>
<feature type="chain" id="PRO_0000229394" description="tRNA pseudouridine synthase B">
    <location>
        <begin position="1"/>
        <end position="308"/>
    </location>
</feature>
<feature type="active site" description="Nucleophile" evidence="1">
    <location>
        <position position="47"/>
    </location>
</feature>
<comment type="function">
    <text evidence="1">Responsible for synthesis of pseudouridine from uracil-55 in the psi GC loop of transfer RNAs.</text>
</comment>
<comment type="catalytic activity">
    <reaction evidence="1">
        <text>uridine(55) in tRNA = pseudouridine(55) in tRNA</text>
        <dbReference type="Rhea" id="RHEA:42532"/>
        <dbReference type="Rhea" id="RHEA-COMP:10101"/>
        <dbReference type="Rhea" id="RHEA-COMP:10102"/>
        <dbReference type="ChEBI" id="CHEBI:65314"/>
        <dbReference type="ChEBI" id="CHEBI:65315"/>
        <dbReference type="EC" id="5.4.99.25"/>
    </reaction>
</comment>
<comment type="similarity">
    <text evidence="1">Belongs to the pseudouridine synthase TruB family. Type 1 subfamily.</text>
</comment>
<accession>Q3BRP7</accession>
<gene>
    <name evidence="1" type="primary">truB</name>
    <name type="ordered locus">XCV2835</name>
</gene>
<evidence type="ECO:0000255" key="1">
    <source>
        <dbReference type="HAMAP-Rule" id="MF_01080"/>
    </source>
</evidence>
<sequence length="308" mass="32676">MKPRIVYRPLHGILLLDKPAGLSSNNALQAARRLLRAEKGGHTGSLDPLATGLLPLCFGEATKIAGLLLGSAKAYDAEIVLGVTTDTDDADGQPLRERAVPDLSEADLQAALAPFIGRIQQQAPIYSALKQGGEPLYAKARRGERIEAPVREVDVQAIDVLGYSAPGLRLRVTCGSGTYIRSLARDLGEVLGCGAHIASLRRLWVEPFRAPQMITLEALSAALEAGTEARTLLLPIEAGLAGFARIVLDQTHAARFRMGQRLRDAAFPPGQVAVFGPDGTPSGLGLVDADGRLSPQRLFNGLNEIPAC</sequence>
<proteinExistence type="inferred from homology"/>
<protein>
    <recommendedName>
        <fullName evidence="1">tRNA pseudouridine synthase B</fullName>
        <ecNumber evidence="1">5.4.99.25</ecNumber>
    </recommendedName>
    <alternativeName>
        <fullName evidence="1">tRNA pseudouridine(55) synthase</fullName>
        <shortName evidence="1">Psi55 synthase</shortName>
    </alternativeName>
    <alternativeName>
        <fullName evidence="1">tRNA pseudouridylate synthase</fullName>
    </alternativeName>
    <alternativeName>
        <fullName evidence="1">tRNA-uridine isomerase</fullName>
    </alternativeName>
</protein>
<name>TRUB_XANE5</name>